<sequence length="1403" mass="151581">MRLGAAWALLLAAALGLGTRGVRAAVALADFYPFGTKRGDTVTPKQDDGGSGLQPLSVPFPFFGAEHSGLYVNNNGIISFLKEVSQFTPVAFPIAKDRCVVAAFWADVDNRRAGDVYYREATDPAMLNRATEDIRRYFPELPDFSATWVFVATWYRVTFFGGSSSSPVNTFQTVLITDGRFSFTIFNYESILWTTGTHASSGGDTDGLGGIAAQAGFNAGDGHRYFNIPGSRTADMAEVETTTNVGVPGRWAFRIDDAQVRVGGCGHTTSVCLVLRPCLNGGKCIDDCVTGNPSYTCSCLAGFTGRRCHLDVNECASHPCQNGGTCTHGVNSFSCQCPAGFKGPTCESAQSPCDNKVCQNGGQCQAESSSAVCVCQAGYTGATCETDVDECSSDPCQNGGSCVDLVGNYSCICVEPFEGPQCETGSYLVPSPCLSNPCQNGGTCVDADEGYVCECPEGFMGLDCRERILNDCDCRNGGRCLGANTTLCQCPPGFFGLLCEFEVTATPCNMNTQCPDGGYCMEYGGSYLCVCHTDHNISHSLPSPCDSDPCFNGGSCDAHEDSYTCECPRGFHGRHCEKARPHLCSSGPCRNGGTCKEMGDEYRCTCPYRFTGRHCEIGKPDSCASGPCHNGGTCFHYIGKYKCDCPPGFSGRHCEIAPSPCFRSPCMNGGTCEDLGTDFSCYCQPGYTGHRCQAEVDCGHPEEVEHATMRFNGTHVGSVALYTCEPGFSLSALSHIRVCQPQGVWSQPPQCIEVDECRSQPCLHGGSCQDLIADYQCLCSPGYEGVHCELETDECQAQPCRNGGSCRDLPRAFICQCPEGFVGIHCETEVDACASSPCQHGGRCEDGGGAYLCVCPEGFFGYNCETVSDPCFSSPCGSRGYCLASNGSHSCTCKVGYTGKDCTKELLPPTALRVERVEESGVSISWSPPEGTTARQVLDGYAVTYASSDGSSRRTDFVDRSRSSHQLRALAAGRAYNISVFSVKRNTNNKNDISRPAALLTRTRPRPIEDFEVTNISANAISVQWALHRIQHATVSRVRVSILYPEASAVQSTEVDRSVDRLTFGDLLPGRRYTVRLTTLSGPGGAEYPTESLASAPLNVWTRPLPPANLTASRVTATSAHMIWDTPAPGISLEAYVINVTTSQSTKSRYIPNGKLVSYTVRDLMPGRRYQLSVTAVQSTEQGQLHSEPAHLYIITSPRDGTDRRWHHGGHHSRMLRNRPAPVRLPELRLLNDHSAPETPTQSSRFSELVDGRGRVSARFGGLPSRAVTVRSQPTTPVPLKNTEAPEQVHLALQLPKNSSKDTESTPGSCSEDACQNGGTCVPGADAHSCDCRPGFKGRHCELACEKVPRPCTRLFSETKSFPVWEGDICHHVYKKVYKVHQDVCFKERCQSTSLRKPKQETK</sequence>
<reference key="1">
    <citation type="journal article" date="2003" name="Nat. Immunol.">
        <title>A stromal cell-derived membrane protein that supports hematopoietic stem cells.</title>
        <authorList>
            <person name="Ueno H."/>
            <person name="Sakita-Ishikawa M."/>
            <person name="Morikawa Y."/>
            <person name="Nakano T."/>
            <person name="Kitamura T."/>
            <person name="Saito M."/>
        </authorList>
    </citation>
    <scope>NUCLEOTIDE SEQUENCE [MRNA] (ISOFORM 2)</scope>
</reference>
<reference key="2">
    <citation type="journal article" date="2004" name="Dev. Dyn.">
        <title>Cloning and expression analysis of the mouse stroma marker Snep encoding a novel nidogen domain protein.</title>
        <authorList>
            <person name="Leimeister C."/>
            <person name="Schumacher N."/>
            <person name="Diez H."/>
            <person name="Gessler M."/>
        </authorList>
    </citation>
    <scope>NUCLEOTIDE SEQUENCE [MRNA] (ISOFORM 1)</scope>
    <scope>TISSUE SPECIFICITY</scope>
    <scope>DEVELOPMENTAL STAGE</scope>
    <source>
        <strain>C57BL/6J</strain>
    </source>
</reference>
<reference key="3">
    <citation type="journal article" date="2004" name="Genome Res.">
        <title>The status, quality, and expansion of the NIH full-length cDNA project: the Mammalian Gene Collection (MGC).</title>
        <authorList>
            <consortium name="The MGC Project Team"/>
        </authorList>
    </citation>
    <scope>NUCLEOTIDE SEQUENCE [LARGE SCALE MRNA] (ISOFORM 1)</scope>
    <source>
        <tissue>Brain</tissue>
    </source>
</reference>
<reference key="4">
    <citation type="journal article" date="2005" name="Science">
        <title>The transcriptional landscape of the mammalian genome.</title>
        <authorList>
            <person name="Carninci P."/>
            <person name="Kasukawa T."/>
            <person name="Katayama S."/>
            <person name="Gough J."/>
            <person name="Frith M.C."/>
            <person name="Maeda N."/>
            <person name="Oyama R."/>
            <person name="Ravasi T."/>
            <person name="Lenhard B."/>
            <person name="Wells C."/>
            <person name="Kodzius R."/>
            <person name="Shimokawa K."/>
            <person name="Bajic V.B."/>
            <person name="Brenner S.E."/>
            <person name="Batalov S."/>
            <person name="Forrest A.R."/>
            <person name="Zavolan M."/>
            <person name="Davis M.J."/>
            <person name="Wilming L.G."/>
            <person name="Aidinis V."/>
            <person name="Allen J.E."/>
            <person name="Ambesi-Impiombato A."/>
            <person name="Apweiler R."/>
            <person name="Aturaliya R.N."/>
            <person name="Bailey T.L."/>
            <person name="Bansal M."/>
            <person name="Baxter L."/>
            <person name="Beisel K.W."/>
            <person name="Bersano T."/>
            <person name="Bono H."/>
            <person name="Chalk A.M."/>
            <person name="Chiu K.P."/>
            <person name="Choudhary V."/>
            <person name="Christoffels A."/>
            <person name="Clutterbuck D.R."/>
            <person name="Crowe M.L."/>
            <person name="Dalla E."/>
            <person name="Dalrymple B.P."/>
            <person name="de Bono B."/>
            <person name="Della Gatta G."/>
            <person name="di Bernardo D."/>
            <person name="Down T."/>
            <person name="Engstrom P."/>
            <person name="Fagiolini M."/>
            <person name="Faulkner G."/>
            <person name="Fletcher C.F."/>
            <person name="Fukushima T."/>
            <person name="Furuno M."/>
            <person name="Futaki S."/>
            <person name="Gariboldi M."/>
            <person name="Georgii-Hemming P."/>
            <person name="Gingeras T.R."/>
            <person name="Gojobori T."/>
            <person name="Green R.E."/>
            <person name="Gustincich S."/>
            <person name="Harbers M."/>
            <person name="Hayashi Y."/>
            <person name="Hensch T.K."/>
            <person name="Hirokawa N."/>
            <person name="Hill D."/>
            <person name="Huminiecki L."/>
            <person name="Iacono M."/>
            <person name="Ikeo K."/>
            <person name="Iwama A."/>
            <person name="Ishikawa T."/>
            <person name="Jakt M."/>
            <person name="Kanapin A."/>
            <person name="Katoh M."/>
            <person name="Kawasawa Y."/>
            <person name="Kelso J."/>
            <person name="Kitamura H."/>
            <person name="Kitano H."/>
            <person name="Kollias G."/>
            <person name="Krishnan S.P."/>
            <person name="Kruger A."/>
            <person name="Kummerfeld S.K."/>
            <person name="Kurochkin I.V."/>
            <person name="Lareau L.F."/>
            <person name="Lazarevic D."/>
            <person name="Lipovich L."/>
            <person name="Liu J."/>
            <person name="Liuni S."/>
            <person name="McWilliam S."/>
            <person name="Madan Babu M."/>
            <person name="Madera M."/>
            <person name="Marchionni L."/>
            <person name="Matsuda H."/>
            <person name="Matsuzawa S."/>
            <person name="Miki H."/>
            <person name="Mignone F."/>
            <person name="Miyake S."/>
            <person name="Morris K."/>
            <person name="Mottagui-Tabar S."/>
            <person name="Mulder N."/>
            <person name="Nakano N."/>
            <person name="Nakauchi H."/>
            <person name="Ng P."/>
            <person name="Nilsson R."/>
            <person name="Nishiguchi S."/>
            <person name="Nishikawa S."/>
            <person name="Nori F."/>
            <person name="Ohara O."/>
            <person name="Okazaki Y."/>
            <person name="Orlando V."/>
            <person name="Pang K.C."/>
            <person name="Pavan W.J."/>
            <person name="Pavesi G."/>
            <person name="Pesole G."/>
            <person name="Petrovsky N."/>
            <person name="Piazza S."/>
            <person name="Reed J."/>
            <person name="Reid J.F."/>
            <person name="Ring B.Z."/>
            <person name="Ringwald M."/>
            <person name="Rost B."/>
            <person name="Ruan Y."/>
            <person name="Salzberg S.L."/>
            <person name="Sandelin A."/>
            <person name="Schneider C."/>
            <person name="Schoenbach C."/>
            <person name="Sekiguchi K."/>
            <person name="Semple C.A."/>
            <person name="Seno S."/>
            <person name="Sessa L."/>
            <person name="Sheng Y."/>
            <person name="Shibata Y."/>
            <person name="Shimada H."/>
            <person name="Shimada K."/>
            <person name="Silva D."/>
            <person name="Sinclair B."/>
            <person name="Sperling S."/>
            <person name="Stupka E."/>
            <person name="Sugiura K."/>
            <person name="Sultana R."/>
            <person name="Takenaka Y."/>
            <person name="Taki K."/>
            <person name="Tammoja K."/>
            <person name="Tan S.L."/>
            <person name="Tang S."/>
            <person name="Taylor M.S."/>
            <person name="Tegner J."/>
            <person name="Teichmann S.A."/>
            <person name="Ueda H.R."/>
            <person name="van Nimwegen E."/>
            <person name="Verardo R."/>
            <person name="Wei C.L."/>
            <person name="Yagi K."/>
            <person name="Yamanishi H."/>
            <person name="Zabarovsky E."/>
            <person name="Zhu S."/>
            <person name="Zimmer A."/>
            <person name="Hide W."/>
            <person name="Bult C."/>
            <person name="Grimmond S.M."/>
            <person name="Teasdale R.D."/>
            <person name="Liu E.T."/>
            <person name="Brusic V."/>
            <person name="Quackenbush J."/>
            <person name="Wahlestedt C."/>
            <person name="Mattick J.S."/>
            <person name="Hume D.A."/>
            <person name="Kai C."/>
            <person name="Sasaki D."/>
            <person name="Tomaru Y."/>
            <person name="Fukuda S."/>
            <person name="Kanamori-Katayama M."/>
            <person name="Suzuki M."/>
            <person name="Aoki J."/>
            <person name="Arakawa T."/>
            <person name="Iida J."/>
            <person name="Imamura K."/>
            <person name="Itoh M."/>
            <person name="Kato T."/>
            <person name="Kawaji H."/>
            <person name="Kawagashira N."/>
            <person name="Kawashima T."/>
            <person name="Kojima M."/>
            <person name="Kondo S."/>
            <person name="Konno H."/>
            <person name="Nakano K."/>
            <person name="Ninomiya N."/>
            <person name="Nishio T."/>
            <person name="Okada M."/>
            <person name="Plessy C."/>
            <person name="Shibata K."/>
            <person name="Shiraki T."/>
            <person name="Suzuki S."/>
            <person name="Tagami M."/>
            <person name="Waki K."/>
            <person name="Watahiki A."/>
            <person name="Okamura-Oho Y."/>
            <person name="Suzuki H."/>
            <person name="Kawai J."/>
            <person name="Hayashizaki Y."/>
        </authorList>
    </citation>
    <scope>NUCLEOTIDE SEQUENCE [LARGE SCALE MRNA] OF 1075-1403 (ISOFORM 1)</scope>
    <source>
        <strain>C57BL/6J</strain>
        <tissue>Wolffian duct</tissue>
    </source>
</reference>
<reference key="5">
    <citation type="journal article" date="2021" name="Biochem. J.">
        <title>Computational and experimental characterization of the novel ECM glycoprotein SNED1 and prediction of its interactome.</title>
        <authorList>
            <person name="Vallet S.D."/>
            <person name="Davis M.N."/>
            <person name="Barque A."/>
            <person name="Thahab A.H."/>
            <person name="Ricard-Blum S."/>
            <person name="Naba A."/>
        </authorList>
    </citation>
    <scope>SUBCELLULAR LOCATION</scope>
</reference>
<reference key="6">
    <citation type="journal article" date="2021" name="Dev. Dyn.">
        <title>Knockout of the gene encoding the extracellular matrix protein SNED1 results in early neonatal lethality and craniofacial malformations.</title>
        <authorList>
            <person name="Barque A."/>
            <person name="Jan K."/>
            <person name="De La Fuente E."/>
            <person name="Nicholas C.L."/>
            <person name="Hynes R.O."/>
            <person name="Naba A."/>
        </authorList>
    </citation>
    <scope>DEVELOPMENTAL STAGE</scope>
    <scope>DISRUPTION PHENOTYPE</scope>
</reference>
<proteinExistence type="evidence at transcript level"/>
<organism>
    <name type="scientific">Mus musculus</name>
    <name type="common">Mouse</name>
    <dbReference type="NCBI Taxonomy" id="10090"/>
    <lineage>
        <taxon>Eukaryota</taxon>
        <taxon>Metazoa</taxon>
        <taxon>Chordata</taxon>
        <taxon>Craniata</taxon>
        <taxon>Vertebrata</taxon>
        <taxon>Euteleostomi</taxon>
        <taxon>Mammalia</taxon>
        <taxon>Eutheria</taxon>
        <taxon>Euarchontoglires</taxon>
        <taxon>Glires</taxon>
        <taxon>Rodentia</taxon>
        <taxon>Myomorpha</taxon>
        <taxon>Muroidea</taxon>
        <taxon>Muridae</taxon>
        <taxon>Murinae</taxon>
        <taxon>Mus</taxon>
        <taxon>Mus</taxon>
    </lineage>
</organism>
<dbReference type="EMBL" id="AY169783">
    <property type="protein sequence ID" value="AAO41836.1"/>
    <property type="molecule type" value="mRNA"/>
</dbReference>
<dbReference type="EMBL" id="AJ584850">
    <property type="protein sequence ID" value="CAE48492.1"/>
    <property type="molecule type" value="mRNA"/>
</dbReference>
<dbReference type="EMBL" id="BC145886">
    <property type="protein sequence ID" value="AAI45887.1"/>
    <property type="molecule type" value="mRNA"/>
</dbReference>
<dbReference type="EMBL" id="AK032805">
    <property type="protein sequence ID" value="BAC28030.1"/>
    <property type="status" value="ALT_INIT"/>
    <property type="molecule type" value="mRNA"/>
</dbReference>
<dbReference type="CCDS" id="CCDS35670.1">
    <molecule id="Q70E20-1"/>
</dbReference>
<dbReference type="RefSeq" id="NP_766051.4">
    <property type="nucleotide sequence ID" value="NM_172463.4"/>
</dbReference>
<dbReference type="SMR" id="Q70E20"/>
<dbReference type="BioGRID" id="229013">
    <property type="interactions" value="2"/>
</dbReference>
<dbReference type="FunCoup" id="Q70E20">
    <property type="interactions" value="71"/>
</dbReference>
<dbReference type="STRING" id="10090.ENSMUSP00000050832"/>
<dbReference type="GlyCosmos" id="Q70E20">
    <property type="glycosylation" value="11 sites, No reported glycans"/>
</dbReference>
<dbReference type="GlyGen" id="Q70E20">
    <property type="glycosylation" value="12 sites, 2 N-linked glycans (2 sites)"/>
</dbReference>
<dbReference type="iPTMnet" id="Q70E20"/>
<dbReference type="PhosphoSitePlus" id="Q70E20"/>
<dbReference type="PaxDb" id="10090-ENSMUSP00000050832"/>
<dbReference type="ProteomicsDB" id="261287">
    <molecule id="Q70E20-1"/>
</dbReference>
<dbReference type="ProteomicsDB" id="261288">
    <molecule id="Q70E20-2"/>
</dbReference>
<dbReference type="Pumba" id="Q70E20"/>
<dbReference type="DNASU" id="208777"/>
<dbReference type="GeneID" id="208777"/>
<dbReference type="KEGG" id="mmu:208777"/>
<dbReference type="UCSC" id="uc007cdm.1">
    <molecule id="Q70E20-1"/>
    <property type="organism name" value="mouse"/>
</dbReference>
<dbReference type="AGR" id="MGI:3045960"/>
<dbReference type="CTD" id="25992"/>
<dbReference type="MGI" id="MGI:3045960">
    <property type="gene designation" value="Sned1"/>
</dbReference>
<dbReference type="eggNOG" id="KOG1217">
    <property type="taxonomic scope" value="Eukaryota"/>
</dbReference>
<dbReference type="eggNOG" id="KOG4291">
    <property type="taxonomic scope" value="Eukaryota"/>
</dbReference>
<dbReference type="InParanoid" id="Q70E20"/>
<dbReference type="OrthoDB" id="9972657at2759"/>
<dbReference type="PhylomeDB" id="Q70E20"/>
<dbReference type="TreeFam" id="TF335195"/>
<dbReference type="BioGRID-ORCS" id="208777">
    <property type="hits" value="3 hits in 77 CRISPR screens"/>
</dbReference>
<dbReference type="PRO" id="PR:Q70E20"/>
<dbReference type="Proteomes" id="UP000000589">
    <property type="component" value="Unplaced"/>
</dbReference>
<dbReference type="RNAct" id="Q70E20">
    <property type="molecule type" value="protein"/>
</dbReference>
<dbReference type="GO" id="GO:0031012">
    <property type="term" value="C:extracellular matrix"/>
    <property type="evidence" value="ECO:0000314"/>
    <property type="project" value="UniProtKB"/>
</dbReference>
<dbReference type="GO" id="GO:0005576">
    <property type="term" value="C:extracellular region"/>
    <property type="evidence" value="ECO:0007669"/>
    <property type="project" value="UniProtKB-KW"/>
</dbReference>
<dbReference type="GO" id="GO:0005509">
    <property type="term" value="F:calcium ion binding"/>
    <property type="evidence" value="ECO:0007669"/>
    <property type="project" value="InterPro"/>
</dbReference>
<dbReference type="GO" id="GO:0007160">
    <property type="term" value="P:cell-matrix adhesion"/>
    <property type="evidence" value="ECO:0007669"/>
    <property type="project" value="InterPro"/>
</dbReference>
<dbReference type="CDD" id="cd00033">
    <property type="entry name" value="CCP"/>
    <property type="match status" value="1"/>
</dbReference>
<dbReference type="CDD" id="cd00054">
    <property type="entry name" value="EGF_CA"/>
    <property type="match status" value="13"/>
</dbReference>
<dbReference type="CDD" id="cd00063">
    <property type="entry name" value="FN3"/>
    <property type="match status" value="3"/>
</dbReference>
<dbReference type="FunFam" id="2.10.25.10:FF:000109">
    <property type="entry name" value="Notch homolog 4, [Drosophila]"/>
    <property type="match status" value="1"/>
</dbReference>
<dbReference type="FunFam" id="2.10.25.10:FF:000057">
    <property type="entry name" value="protocadherin Fat 1 isoform X2"/>
    <property type="match status" value="1"/>
</dbReference>
<dbReference type="FunFam" id="2.10.25.10:FF:000296">
    <property type="entry name" value="Sushi, nidogen and EGF like domains 1"/>
    <property type="match status" value="1"/>
</dbReference>
<dbReference type="FunFam" id="2.10.25.10:FF:000308">
    <property type="entry name" value="Sushi, nidogen and EGF like domains 1"/>
    <property type="match status" value="1"/>
</dbReference>
<dbReference type="FunFam" id="2.10.25.10:FF:000360">
    <property type="entry name" value="Sushi, nidogen and EGF like domains 1"/>
    <property type="match status" value="1"/>
</dbReference>
<dbReference type="FunFam" id="2.10.25.10:FF:000365">
    <property type="entry name" value="Sushi, nidogen and EGF like domains 1"/>
    <property type="match status" value="1"/>
</dbReference>
<dbReference type="FunFam" id="2.10.25.10:FF:000457">
    <property type="entry name" value="Sushi, nidogen and EGF like domains 1"/>
    <property type="match status" value="1"/>
</dbReference>
<dbReference type="FunFam" id="2.60.40.10:FF:000633">
    <property type="entry name" value="Sushi, nidogen and EGF like domains 1"/>
    <property type="match status" value="1"/>
</dbReference>
<dbReference type="FunFam" id="2.10.25.10:FF:000239">
    <property type="entry name" value="Sushi, nidogen and EGF-like domain-containing protein 1"/>
    <property type="match status" value="1"/>
</dbReference>
<dbReference type="FunFam" id="2.10.25.10:FF:000540">
    <property type="entry name" value="Sushi, nidogen and EGF-like domain-containing protein 1"/>
    <property type="match status" value="1"/>
</dbReference>
<dbReference type="FunFam" id="2.10.25.10:FF:000213">
    <property type="entry name" value="sushi, nidogen and EGF-like domain-containing protein 1"/>
    <property type="match status" value="1"/>
</dbReference>
<dbReference type="FunFam" id="2.10.25.10:FF:000251">
    <property type="entry name" value="sushi, nidogen and EGF-like domain-containing protein 1"/>
    <property type="match status" value="1"/>
</dbReference>
<dbReference type="FunFam" id="2.10.25.10:FF:000373">
    <property type="entry name" value="sushi, nidogen and EGF-like domain-containing protein 1"/>
    <property type="match status" value="1"/>
</dbReference>
<dbReference type="FunFam" id="2.10.25.10:FF:000283">
    <property type="entry name" value="sushi, nidogen and EGF-like domain-containing protein 1 isoform X2"/>
    <property type="match status" value="1"/>
</dbReference>
<dbReference type="FunFam" id="2.60.40.10:FF:000618">
    <property type="entry name" value="sushi, nidogen and EGF-like domain-containing protein 1 isoform X2"/>
    <property type="match status" value="1"/>
</dbReference>
<dbReference type="FunFam" id="2.60.40.10:FF:000870">
    <property type="entry name" value="sushi, nidogen and EGF-like domain-containing protein 1 isoform X3"/>
    <property type="match status" value="1"/>
</dbReference>
<dbReference type="FunFam" id="2.10.25.10:FF:000255">
    <property type="entry name" value="Sushi, nidogen and EGF-like domains 1"/>
    <property type="match status" value="1"/>
</dbReference>
<dbReference type="FunFam" id="2.10.25.10:FF:000006">
    <property type="entry name" value="Versican core protein-like isoform 1"/>
    <property type="match status" value="1"/>
</dbReference>
<dbReference type="Gene3D" id="2.60.40.10">
    <property type="entry name" value="Immunoglobulins"/>
    <property type="match status" value="3"/>
</dbReference>
<dbReference type="Gene3D" id="2.10.25.10">
    <property type="entry name" value="Laminin"/>
    <property type="match status" value="15"/>
</dbReference>
<dbReference type="InterPro" id="IPR001881">
    <property type="entry name" value="EGF-like_Ca-bd_dom"/>
</dbReference>
<dbReference type="InterPro" id="IPR013032">
    <property type="entry name" value="EGF-like_CS"/>
</dbReference>
<dbReference type="InterPro" id="IPR000742">
    <property type="entry name" value="EGF-like_dom"/>
</dbReference>
<dbReference type="InterPro" id="IPR000152">
    <property type="entry name" value="EGF-type_Asp/Asn_hydroxyl_site"/>
</dbReference>
<dbReference type="InterPro" id="IPR018097">
    <property type="entry name" value="EGF_Ca-bd_CS"/>
</dbReference>
<dbReference type="InterPro" id="IPR003961">
    <property type="entry name" value="FN3_dom"/>
</dbReference>
<dbReference type="InterPro" id="IPR036116">
    <property type="entry name" value="FN3_sf"/>
</dbReference>
<dbReference type="InterPro" id="IPR009030">
    <property type="entry name" value="Growth_fac_rcpt_cys_sf"/>
</dbReference>
<dbReference type="InterPro" id="IPR013783">
    <property type="entry name" value="Ig-like_fold"/>
</dbReference>
<dbReference type="InterPro" id="IPR003886">
    <property type="entry name" value="NIDO_dom"/>
</dbReference>
<dbReference type="InterPro" id="IPR035976">
    <property type="entry name" value="Sushi/SCR/CCP_sf"/>
</dbReference>
<dbReference type="InterPro" id="IPR000436">
    <property type="entry name" value="Sushi_SCR_CCP_dom"/>
</dbReference>
<dbReference type="PANTHER" id="PTHR12916">
    <property type="entry name" value="CYTOCHROME C OXIDASE POLYPEPTIDE VIC-2"/>
    <property type="match status" value="1"/>
</dbReference>
<dbReference type="PANTHER" id="PTHR12916:SF9">
    <property type="entry name" value="NEUROGENIC LOCUS NOTCH HOMOLOG PROTEIN 1-RELATED"/>
    <property type="match status" value="1"/>
</dbReference>
<dbReference type="Pfam" id="PF00008">
    <property type="entry name" value="EGF"/>
    <property type="match status" value="13"/>
</dbReference>
<dbReference type="Pfam" id="PF00041">
    <property type="entry name" value="fn3"/>
    <property type="match status" value="3"/>
</dbReference>
<dbReference type="Pfam" id="PF12661">
    <property type="entry name" value="hEGF"/>
    <property type="match status" value="1"/>
</dbReference>
<dbReference type="Pfam" id="PF06119">
    <property type="entry name" value="NIDO"/>
    <property type="match status" value="1"/>
</dbReference>
<dbReference type="PRINTS" id="PR00010">
    <property type="entry name" value="EGFBLOOD"/>
</dbReference>
<dbReference type="SMART" id="SM00032">
    <property type="entry name" value="CCP"/>
    <property type="match status" value="1"/>
</dbReference>
<dbReference type="SMART" id="SM00181">
    <property type="entry name" value="EGF"/>
    <property type="match status" value="15"/>
</dbReference>
<dbReference type="SMART" id="SM00179">
    <property type="entry name" value="EGF_CA"/>
    <property type="match status" value="14"/>
</dbReference>
<dbReference type="SMART" id="SM00060">
    <property type="entry name" value="FN3"/>
    <property type="match status" value="3"/>
</dbReference>
<dbReference type="SMART" id="SM00539">
    <property type="entry name" value="NIDO"/>
    <property type="match status" value="1"/>
</dbReference>
<dbReference type="SUPFAM" id="SSF57535">
    <property type="entry name" value="Complement control module/SCR domain"/>
    <property type="match status" value="1"/>
</dbReference>
<dbReference type="SUPFAM" id="SSF57196">
    <property type="entry name" value="EGF/Laminin"/>
    <property type="match status" value="13"/>
</dbReference>
<dbReference type="SUPFAM" id="SSF49265">
    <property type="entry name" value="Fibronectin type III"/>
    <property type="match status" value="2"/>
</dbReference>
<dbReference type="SUPFAM" id="SSF57184">
    <property type="entry name" value="Growth factor receptor domain"/>
    <property type="match status" value="1"/>
</dbReference>
<dbReference type="PROSITE" id="PS00010">
    <property type="entry name" value="ASX_HYDROXYL"/>
    <property type="match status" value="6"/>
</dbReference>
<dbReference type="PROSITE" id="PS00022">
    <property type="entry name" value="EGF_1"/>
    <property type="match status" value="15"/>
</dbReference>
<dbReference type="PROSITE" id="PS01186">
    <property type="entry name" value="EGF_2"/>
    <property type="match status" value="14"/>
</dbReference>
<dbReference type="PROSITE" id="PS50026">
    <property type="entry name" value="EGF_3"/>
    <property type="match status" value="15"/>
</dbReference>
<dbReference type="PROSITE" id="PS01187">
    <property type="entry name" value="EGF_CA"/>
    <property type="match status" value="3"/>
</dbReference>
<dbReference type="PROSITE" id="PS50853">
    <property type="entry name" value="FN3"/>
    <property type="match status" value="3"/>
</dbReference>
<dbReference type="PROSITE" id="PS51220">
    <property type="entry name" value="NIDO"/>
    <property type="match status" value="1"/>
</dbReference>
<dbReference type="PROSITE" id="PS50923">
    <property type="entry name" value="SUSHI"/>
    <property type="match status" value="1"/>
</dbReference>
<evidence type="ECO:0000250" key="1">
    <source>
        <dbReference type="UniProtKB" id="Q8TER0"/>
    </source>
</evidence>
<evidence type="ECO:0000255" key="2"/>
<evidence type="ECO:0000255" key="3">
    <source>
        <dbReference type="PROSITE-ProRule" id="PRU00076"/>
    </source>
</evidence>
<evidence type="ECO:0000255" key="4">
    <source>
        <dbReference type="PROSITE-ProRule" id="PRU00302"/>
    </source>
</evidence>
<evidence type="ECO:0000255" key="5">
    <source>
        <dbReference type="PROSITE-ProRule" id="PRU00316"/>
    </source>
</evidence>
<evidence type="ECO:0000255" key="6">
    <source>
        <dbReference type="PROSITE-ProRule" id="PRU00570"/>
    </source>
</evidence>
<evidence type="ECO:0000269" key="7">
    <source>
    </source>
</evidence>
<evidence type="ECO:0000269" key="8">
    <source>
    </source>
</evidence>
<evidence type="ECO:0000269" key="9">
    <source>
    </source>
</evidence>
<evidence type="ECO:0000303" key="10">
    <source>
    </source>
</evidence>
<evidence type="ECO:0000303" key="11">
    <source>
    </source>
</evidence>
<evidence type="ECO:0000303" key="12">
    <source>
    </source>
</evidence>
<evidence type="ECO:0000305" key="13"/>
<evidence type="ECO:0000312" key="14">
    <source>
        <dbReference type="MGI" id="MGI:3045960"/>
    </source>
</evidence>
<name>SNED1_MOUSE</name>
<keyword id="KW-0025">Alternative splicing</keyword>
<keyword id="KW-0106">Calcium</keyword>
<keyword id="KW-1015">Disulfide bond</keyword>
<keyword id="KW-0245">EGF-like domain</keyword>
<keyword id="KW-0272">Extracellular matrix</keyword>
<keyword id="KW-0325">Glycoprotein</keyword>
<keyword id="KW-0597">Phosphoprotein</keyword>
<keyword id="KW-1185">Reference proteome</keyword>
<keyword id="KW-0677">Repeat</keyword>
<keyword id="KW-0964">Secreted</keyword>
<keyword id="KW-0732">Signal</keyword>
<keyword id="KW-0768">Sushi</keyword>
<comment type="subcellular location">
    <subcellularLocation>
        <location evidence="9">Secreted</location>
        <location evidence="9">Extracellular space</location>
        <location evidence="9">Extracellular matrix</location>
    </subcellularLocation>
    <text evidence="9">Forms microfibrils within the extracellular matrix and colocalizes with fibronectin (FN1).</text>
</comment>
<comment type="alternative products">
    <event type="alternative splicing"/>
    <isoform>
        <id>Q70E20-1</id>
        <name>1</name>
        <sequence type="displayed"/>
    </isoform>
    <isoform>
        <id>Q70E20-2</id>
        <name>2</name>
        <sequence type="described" ref="VSP_027755"/>
    </isoform>
</comment>
<comment type="tissue specificity">
    <text evidence="7">Expressed in lung.</text>
</comment>
<comment type="developmental stage">
    <text evidence="7 8">Widely expressed in embryos, notably in skeletal and craniofacial precursors (PubMed:33012048). Expressed in mesenchymal cells or stromal cell from 10.5 dpc to 17.5 dpc (PubMed:15162516).</text>
</comment>
<comment type="PTM">
    <text evidence="1">Phosphorylated on serine and threonine residues.</text>
</comment>
<comment type="PTM">
    <text evidence="1">N-glycosylated.</text>
</comment>
<comment type="disruption phenotype">
    <text evidence="8">Early neonatal lethality, possibly due to impaired nasal respiration caused by asymmetric and occluded nasal cavities (PubMed:33012048). In addition to nasal cavity occlusion, mice display growth defects and craniofacial malformations (PubMed:33012048). Mice with a specific deletion in neural crest-cells survive, but display growth defects and craniofacial malformations partly phenocopying the effect of the global knockout mice (PubMed:33012048).</text>
</comment>
<comment type="sequence caution" evidence="13">
    <conflict type="erroneous initiation">
        <sequence resource="EMBL-CDS" id="BAC28030"/>
    </conflict>
</comment>
<protein>
    <recommendedName>
        <fullName evidence="13">Sushi, nidogen and EGF-like domain-containing protein 1</fullName>
    </recommendedName>
    <alternativeName>
        <fullName evidence="10">Secreted protein SST-3</fullName>
    </alternativeName>
    <alternativeName>
        <fullName evidence="11">Stromal nidogen extracellular matrix protein</fullName>
    </alternativeName>
</protein>
<accession>Q70E20</accession>
<accession>A6H6I3</accession>
<accession>Q810H2</accession>
<accession>Q8BMD9</accession>
<gene>
    <name evidence="12 14" type="primary">Sned1</name>
    <name evidence="11" type="synonym">Snep</name>
</gene>
<feature type="signal peptide" evidence="2">
    <location>
        <begin position="1"/>
        <end position="24"/>
    </location>
</feature>
<feature type="chain" id="PRO_5000072108" description="Sushi, nidogen and EGF-like domain-containing protein 1">
    <location>
        <begin position="25"/>
        <end position="1403"/>
    </location>
</feature>
<feature type="domain" description="NIDO" evidence="6">
    <location>
        <begin position="103"/>
        <end position="258"/>
    </location>
</feature>
<feature type="domain" description="EGF-like 1" evidence="3">
    <location>
        <begin position="268"/>
        <end position="309"/>
    </location>
</feature>
<feature type="domain" description="EGF-like 2" evidence="3">
    <location>
        <begin position="311"/>
        <end position="347"/>
    </location>
</feature>
<feature type="domain" description="EGF-like 3" evidence="3">
    <location>
        <begin position="349"/>
        <end position="385"/>
    </location>
</feature>
<feature type="domain" description="EGF-like 4; calcium-binding" evidence="3">
    <location>
        <begin position="387"/>
        <end position="423"/>
    </location>
</feature>
<feature type="domain" description="EGF-like 5" evidence="3">
    <location>
        <begin position="429"/>
        <end position="465"/>
    </location>
</feature>
<feature type="domain" description="EGF-like 6" evidence="3">
    <location>
        <begin position="468"/>
        <end position="500"/>
    </location>
</feature>
<feature type="domain" description="EGF-like 7" evidence="3">
    <location>
        <begin position="541"/>
        <end position="577"/>
    </location>
</feature>
<feature type="domain" description="EGF-like 8" evidence="3">
    <location>
        <begin position="580"/>
        <end position="616"/>
    </location>
</feature>
<feature type="domain" description="EGF-like 9" evidence="3">
    <location>
        <begin position="619"/>
        <end position="655"/>
    </location>
</feature>
<feature type="domain" description="EGF-like 10" evidence="3">
    <location>
        <begin position="657"/>
        <end position="693"/>
    </location>
</feature>
<feature type="domain" description="Sushi" evidence="4">
    <location>
        <begin position="696"/>
        <end position="753"/>
    </location>
</feature>
<feature type="domain" description="EGF-like 11; calcium-binding" evidence="3">
    <location>
        <begin position="753"/>
        <end position="789"/>
    </location>
</feature>
<feature type="domain" description="EGF-like 12; calcium-binding" evidence="3">
    <location>
        <begin position="791"/>
        <end position="827"/>
    </location>
</feature>
<feature type="domain" description="EGF-like 13" evidence="3">
    <location>
        <begin position="829"/>
        <end position="865"/>
    </location>
</feature>
<feature type="domain" description="EGF-like 14" evidence="3">
    <location>
        <begin position="867"/>
        <end position="903"/>
    </location>
</feature>
<feature type="domain" description="Fibronectin type-III 1" evidence="5">
    <location>
        <begin position="908"/>
        <end position="1006"/>
    </location>
</feature>
<feature type="domain" description="Fibronectin type-III 2" evidence="5">
    <location>
        <begin position="1007"/>
        <end position="1105"/>
    </location>
</feature>
<feature type="domain" description="Fibronectin type-III 3" evidence="5">
    <location>
        <begin position="1106"/>
        <end position="1200"/>
    </location>
</feature>
<feature type="domain" description="EGF-like 15" evidence="3">
    <location>
        <begin position="1306"/>
        <end position="1342"/>
    </location>
</feature>
<feature type="glycosylation site" description="N-linked (GlcNAc...) asparagine" evidence="2">
    <location>
        <position position="292"/>
    </location>
</feature>
<feature type="glycosylation site" description="N-linked (GlcNAc...) asparagine" evidence="2">
    <location>
        <position position="408"/>
    </location>
</feature>
<feature type="glycosylation site" description="N-linked (GlcNAc...) asparagine" evidence="2">
    <location>
        <position position="484"/>
    </location>
</feature>
<feature type="glycosylation site" description="N-linked (GlcNAc...) asparagine" evidence="2">
    <location>
        <position position="536"/>
    </location>
</feature>
<feature type="glycosylation site" description="N-linked (GlcNAc...) asparagine" evidence="2">
    <location>
        <position position="712"/>
    </location>
</feature>
<feature type="glycosylation site" description="N-linked (GlcNAc...) asparagine" evidence="2">
    <location>
        <position position="886"/>
    </location>
</feature>
<feature type="glycosylation site" description="N-linked (GlcNAc...) asparagine" evidence="2">
    <location>
        <position position="977"/>
    </location>
</feature>
<feature type="glycosylation site" description="N-linked (GlcNAc...) asparagine" evidence="2">
    <location>
        <position position="1015"/>
    </location>
</feature>
<feature type="glycosylation site" description="N-linked (GlcNAc...) asparagine" evidence="2">
    <location>
        <position position="1109"/>
    </location>
</feature>
<feature type="glycosylation site" description="N-linked (GlcNAc...) asparagine" evidence="2">
    <location>
        <position position="1139"/>
    </location>
</feature>
<feature type="glycosylation site" description="N-linked (GlcNAc...) asparagine" evidence="2">
    <location>
        <position position="1298"/>
    </location>
</feature>
<feature type="disulfide bond" evidence="3">
    <location>
        <begin position="272"/>
        <end position="284"/>
    </location>
</feature>
<feature type="disulfide bond" evidence="3">
    <location>
        <begin position="278"/>
        <end position="297"/>
    </location>
</feature>
<feature type="disulfide bond" evidence="3">
    <location>
        <begin position="299"/>
        <end position="308"/>
    </location>
</feature>
<feature type="disulfide bond" evidence="3">
    <location>
        <begin position="315"/>
        <end position="326"/>
    </location>
</feature>
<feature type="disulfide bond" evidence="3">
    <location>
        <begin position="320"/>
        <end position="335"/>
    </location>
</feature>
<feature type="disulfide bond" evidence="3">
    <location>
        <begin position="337"/>
        <end position="346"/>
    </location>
</feature>
<feature type="disulfide bond" evidence="3">
    <location>
        <begin position="353"/>
        <end position="364"/>
    </location>
</feature>
<feature type="disulfide bond" evidence="3">
    <location>
        <begin position="358"/>
        <end position="373"/>
    </location>
</feature>
<feature type="disulfide bond" evidence="3">
    <location>
        <begin position="375"/>
        <end position="384"/>
    </location>
</feature>
<feature type="disulfide bond" evidence="3">
    <location>
        <begin position="391"/>
        <end position="402"/>
    </location>
</feature>
<feature type="disulfide bond" evidence="3">
    <location>
        <begin position="396"/>
        <end position="411"/>
    </location>
</feature>
<feature type="disulfide bond" evidence="3">
    <location>
        <begin position="413"/>
        <end position="422"/>
    </location>
</feature>
<feature type="disulfide bond" evidence="3">
    <location>
        <begin position="433"/>
        <end position="444"/>
    </location>
</feature>
<feature type="disulfide bond" evidence="3">
    <location>
        <begin position="438"/>
        <end position="453"/>
    </location>
</feature>
<feature type="disulfide bond" evidence="3">
    <location>
        <begin position="455"/>
        <end position="464"/>
    </location>
</feature>
<feature type="disulfide bond" evidence="3">
    <location>
        <begin position="472"/>
        <end position="480"/>
    </location>
</feature>
<feature type="disulfide bond" evidence="3">
    <location>
        <begin position="474"/>
        <end position="488"/>
    </location>
</feature>
<feature type="disulfide bond" evidence="3">
    <location>
        <begin position="490"/>
        <end position="499"/>
    </location>
</feature>
<feature type="disulfide bond" evidence="3">
    <location>
        <begin position="545"/>
        <end position="556"/>
    </location>
</feature>
<feature type="disulfide bond" evidence="3">
    <location>
        <begin position="550"/>
        <end position="565"/>
    </location>
</feature>
<feature type="disulfide bond" evidence="3">
    <location>
        <begin position="567"/>
        <end position="576"/>
    </location>
</feature>
<feature type="disulfide bond" evidence="3">
    <location>
        <begin position="584"/>
        <end position="595"/>
    </location>
</feature>
<feature type="disulfide bond" evidence="3">
    <location>
        <begin position="589"/>
        <end position="604"/>
    </location>
</feature>
<feature type="disulfide bond" evidence="3">
    <location>
        <begin position="606"/>
        <end position="615"/>
    </location>
</feature>
<feature type="disulfide bond" evidence="3">
    <location>
        <begin position="623"/>
        <end position="634"/>
    </location>
</feature>
<feature type="disulfide bond" evidence="3">
    <location>
        <begin position="628"/>
        <end position="643"/>
    </location>
</feature>
<feature type="disulfide bond" evidence="3">
    <location>
        <begin position="645"/>
        <end position="654"/>
    </location>
</feature>
<feature type="disulfide bond" evidence="3">
    <location>
        <begin position="661"/>
        <end position="672"/>
    </location>
</feature>
<feature type="disulfide bond" evidence="3">
    <location>
        <begin position="666"/>
        <end position="681"/>
    </location>
</feature>
<feature type="disulfide bond" evidence="3">
    <location>
        <begin position="683"/>
        <end position="692"/>
    </location>
</feature>
<feature type="disulfide bond" evidence="4">
    <location>
        <begin position="698"/>
        <end position="739"/>
    </location>
</feature>
<feature type="disulfide bond" evidence="4">
    <location>
        <begin position="724"/>
        <end position="751"/>
    </location>
</feature>
<feature type="disulfide bond" evidence="3">
    <location>
        <begin position="757"/>
        <end position="768"/>
    </location>
</feature>
<feature type="disulfide bond" evidence="3">
    <location>
        <begin position="762"/>
        <end position="777"/>
    </location>
</feature>
<feature type="disulfide bond" evidence="3">
    <location>
        <begin position="779"/>
        <end position="788"/>
    </location>
</feature>
<feature type="disulfide bond" evidence="3">
    <location>
        <begin position="795"/>
        <end position="806"/>
    </location>
</feature>
<feature type="disulfide bond" evidence="3">
    <location>
        <begin position="800"/>
        <end position="815"/>
    </location>
</feature>
<feature type="disulfide bond" evidence="3">
    <location>
        <begin position="817"/>
        <end position="826"/>
    </location>
</feature>
<feature type="disulfide bond" evidence="3">
    <location>
        <begin position="833"/>
        <end position="844"/>
    </location>
</feature>
<feature type="disulfide bond" evidence="3">
    <location>
        <begin position="838"/>
        <end position="853"/>
    </location>
</feature>
<feature type="disulfide bond" evidence="3">
    <location>
        <begin position="855"/>
        <end position="864"/>
    </location>
</feature>
<feature type="disulfide bond" evidence="3">
    <location>
        <begin position="871"/>
        <end position="882"/>
    </location>
</feature>
<feature type="disulfide bond" evidence="3">
    <location>
        <begin position="876"/>
        <end position="891"/>
    </location>
</feature>
<feature type="disulfide bond" evidence="3">
    <location>
        <begin position="893"/>
        <end position="902"/>
    </location>
</feature>
<feature type="disulfide bond" evidence="3">
    <location>
        <begin position="1310"/>
        <end position="1321"/>
    </location>
</feature>
<feature type="disulfide bond" evidence="3">
    <location>
        <begin position="1315"/>
        <end position="1330"/>
    </location>
</feature>
<feature type="disulfide bond" evidence="3">
    <location>
        <begin position="1332"/>
        <end position="1341"/>
    </location>
</feature>
<feature type="splice variant" id="VSP_027755" description="In isoform 2." evidence="10">
    <location>
        <begin position="1066"/>
        <end position="1403"/>
    </location>
</feature>
<feature type="sequence conflict" description="In Ref. 2; CAE48492." evidence="13" ref="2">
    <original>C</original>
    <variation>W</variation>
    <location>
        <position position="288"/>
    </location>
</feature>
<feature type="sequence conflict" description="In Ref. 1; AAO41836." evidence="13" ref="1">
    <original>V</original>
    <variation>M</variation>
    <location>
        <position position="867"/>
    </location>
</feature>
<feature type="sequence conflict" description="In Ref. 4; BAC28030." evidence="13" ref="4">
    <location>
        <position position="1084"/>
    </location>
</feature>
<feature type="sequence conflict" description="In Ref. 3; AAI45887 and 4; BAC28030." evidence="13" ref="3 4">
    <original>I</original>
    <variation>V</variation>
    <location>
        <position position="1123"/>
    </location>
</feature>